<sequence>MAQEQTKRGGGGDDDDVTDLGGPAGQERREKLAEDTDDLLDEIDDVLEENAEDFVRAYVQKGGQ</sequence>
<name>PUP_MYCA9</name>
<evidence type="ECO:0000255" key="1">
    <source>
        <dbReference type="HAMAP-Rule" id="MF_02106"/>
    </source>
</evidence>
<evidence type="ECO:0000256" key="2">
    <source>
        <dbReference type="SAM" id="MobiDB-lite"/>
    </source>
</evidence>
<gene>
    <name evidence="1" type="primary">pup</name>
    <name type="ordered locus">MAB_2171</name>
</gene>
<comment type="function">
    <text evidence="1">Protein modifier that is covalently attached to lysine residues of substrate proteins, thereby targeting them for proteasomal degradation. The tagging system is termed pupylation.</text>
</comment>
<comment type="pathway">
    <text evidence="1">Protein degradation; proteasomal Pup-dependent pathway.</text>
</comment>
<comment type="subunit">
    <text evidence="1">Strongly interacts with the proteasome-associated ATPase ARC through a hydrophobic interface; the interacting region of Pup lies in its C-terminal half. There is one Pup binding site per ARC hexamer ring.</text>
</comment>
<comment type="domain">
    <text evidence="1">The N-terminal unstructured half of Pup provides a signal required to initiate unfolding and degradation by the proteasome but is not needed for pupylation, while the C-terminal helical half of Pup interacts with ARC to target proteins to the proteasome.</text>
</comment>
<comment type="PTM">
    <text evidence="1">Is modified by deamidation of its C-terminal glutamine to glutamate by the deamidase Dop, a prerequisite to the subsequent pupylation process.</text>
</comment>
<comment type="similarity">
    <text evidence="1">Belongs to the prokaryotic ubiquitin-like protein family.</text>
</comment>
<organism>
    <name type="scientific">Mycobacteroides abscessus (strain ATCC 19977 / DSM 44196 / CCUG 20993 / CIP 104536 / JCM 13569 / NCTC 13031 / TMC 1543 / L948)</name>
    <name type="common">Mycobacterium abscessus</name>
    <dbReference type="NCBI Taxonomy" id="561007"/>
    <lineage>
        <taxon>Bacteria</taxon>
        <taxon>Bacillati</taxon>
        <taxon>Actinomycetota</taxon>
        <taxon>Actinomycetes</taxon>
        <taxon>Mycobacteriales</taxon>
        <taxon>Mycobacteriaceae</taxon>
        <taxon>Mycobacteroides</taxon>
        <taxon>Mycobacteroides abscessus</taxon>
    </lineage>
</organism>
<keyword id="KW-0175">Coiled coil</keyword>
<keyword id="KW-1017">Isopeptide bond</keyword>
<keyword id="KW-1185">Reference proteome</keyword>
<keyword id="KW-0833">Ubl conjugation pathway</keyword>
<accession>B1MAI1</accession>
<dbReference type="EMBL" id="CU458896">
    <property type="protein sequence ID" value="CAM62252.1"/>
    <property type="molecule type" value="Genomic_DNA"/>
</dbReference>
<dbReference type="RefSeq" id="WP_005061283.1">
    <property type="nucleotide sequence ID" value="NZ_MLCG01000002.1"/>
</dbReference>
<dbReference type="SMR" id="B1MAI1"/>
<dbReference type="GeneID" id="93379107"/>
<dbReference type="KEGG" id="mab:MAB_2171"/>
<dbReference type="UniPathway" id="UPA00997"/>
<dbReference type="Proteomes" id="UP000007137">
    <property type="component" value="Chromosome"/>
</dbReference>
<dbReference type="GO" id="GO:0070628">
    <property type="term" value="F:proteasome binding"/>
    <property type="evidence" value="ECO:0007669"/>
    <property type="project" value="UniProtKB-UniRule"/>
</dbReference>
<dbReference type="GO" id="GO:0031386">
    <property type="term" value="F:protein tag activity"/>
    <property type="evidence" value="ECO:0007669"/>
    <property type="project" value="UniProtKB-UniRule"/>
</dbReference>
<dbReference type="GO" id="GO:0019941">
    <property type="term" value="P:modification-dependent protein catabolic process"/>
    <property type="evidence" value="ECO:0007669"/>
    <property type="project" value="UniProtKB-UniRule"/>
</dbReference>
<dbReference type="GO" id="GO:0010498">
    <property type="term" value="P:proteasomal protein catabolic process"/>
    <property type="evidence" value="ECO:0007669"/>
    <property type="project" value="UniProtKB-UniRule"/>
</dbReference>
<dbReference type="GO" id="GO:0070490">
    <property type="term" value="P:protein pupylation"/>
    <property type="evidence" value="ECO:0007669"/>
    <property type="project" value="UniProtKB-UniRule"/>
</dbReference>
<dbReference type="HAMAP" id="MF_02106">
    <property type="entry name" value="Pup"/>
    <property type="match status" value="1"/>
</dbReference>
<dbReference type="InterPro" id="IPR008515">
    <property type="entry name" value="Ubiquitin-like_Pup"/>
</dbReference>
<dbReference type="NCBIfam" id="TIGR03687">
    <property type="entry name" value="pupylate_cterm"/>
    <property type="match status" value="1"/>
</dbReference>
<dbReference type="Pfam" id="PF05639">
    <property type="entry name" value="Pup"/>
    <property type="match status" value="1"/>
</dbReference>
<protein>
    <recommendedName>
        <fullName evidence="1">Prokaryotic ubiquitin-like protein Pup</fullName>
    </recommendedName>
    <alternativeName>
        <fullName evidence="1">Bacterial ubiquitin-like modifier</fullName>
    </alternativeName>
</protein>
<feature type="chain" id="PRO_0000390586" description="Prokaryotic ubiquitin-like protein Pup">
    <location>
        <begin position="1"/>
        <end position="64"/>
    </location>
</feature>
<feature type="region of interest" description="Disordered" evidence="2">
    <location>
        <begin position="1"/>
        <end position="36"/>
    </location>
</feature>
<feature type="region of interest" description="ARC ATPase binding" evidence="1">
    <location>
        <begin position="21"/>
        <end position="58"/>
    </location>
</feature>
<feature type="coiled-coil region" evidence="1">
    <location>
        <begin position="24"/>
        <end position="52"/>
    </location>
</feature>
<feature type="compositionally biased region" description="Basic and acidic residues" evidence="2">
    <location>
        <begin position="1"/>
        <end position="11"/>
    </location>
</feature>
<feature type="modified residue" description="Deamidated glutamine" evidence="1">
    <location>
        <position position="64"/>
    </location>
</feature>
<feature type="cross-link" description="Isoglutamyl lysine isopeptide (Gln-Lys) (interchain with K-? in acceptor proteins)" evidence="1">
    <location>
        <position position="64"/>
    </location>
</feature>
<proteinExistence type="inferred from homology"/>
<reference key="1">
    <citation type="journal article" date="2009" name="PLoS ONE">
        <title>Non mycobacterial virulence genes in the genome of the emerging pathogen Mycobacterium abscessus.</title>
        <authorList>
            <person name="Ripoll F."/>
            <person name="Pasek S."/>
            <person name="Schenowitz C."/>
            <person name="Dossat C."/>
            <person name="Barbe V."/>
            <person name="Rottman M."/>
            <person name="Macheras E."/>
            <person name="Heym B."/>
            <person name="Herrmann J.L."/>
            <person name="Daffe M."/>
            <person name="Brosch R."/>
            <person name="Risler J.L."/>
            <person name="Gaillard J.L."/>
        </authorList>
    </citation>
    <scope>NUCLEOTIDE SEQUENCE [LARGE SCALE GENOMIC DNA]</scope>
    <source>
        <strain>ATCC 19977 / DSM 44196 / CCUG 20993 / CIP 104536 / JCM 13569 / NCTC 13031 / TMC 1543 / L948</strain>
    </source>
</reference>